<organism>
    <name type="scientific">Dictyostelium discoideum</name>
    <name type="common">Social amoeba</name>
    <dbReference type="NCBI Taxonomy" id="44689"/>
    <lineage>
        <taxon>Eukaryota</taxon>
        <taxon>Amoebozoa</taxon>
        <taxon>Evosea</taxon>
        <taxon>Eumycetozoa</taxon>
        <taxon>Dictyostelia</taxon>
        <taxon>Dictyosteliales</taxon>
        <taxon>Dictyosteliaceae</taxon>
        <taxon>Dictyostelium</taxon>
    </lineage>
</organism>
<comment type="function">
    <text evidence="3">Overexpression promotes the formation of filopodia and membrane ruffles.</text>
</comment>
<comment type="subunit">
    <text evidence="3 4 5">Interacts with pakB. Interacts (in GTP-bound form) with rgaA.</text>
</comment>
<comment type="subcellular location">
    <subcellularLocation>
        <location evidence="6">Cell membrane</location>
        <topology evidence="6">Lipid-anchor</topology>
        <orientation evidence="6">Cytoplasmic side</orientation>
    </subcellularLocation>
</comment>
<comment type="similarity">
    <text evidence="6">Belongs to the small GTPase superfamily. Rho family.</text>
</comment>
<proteinExistence type="evidence at protein level"/>
<reference key="1">
    <citation type="journal article" date="1993" name="Gene">
        <title>Cloning and characterization of seven novel Dictyostelium discoideum rac-related genes belonging to the rho family of GTPases.</title>
        <authorList>
            <person name="Bush J.M. IV"/>
            <person name="Franek K."/>
            <person name="Cardelli J.A."/>
        </authorList>
    </citation>
    <scope>NUCLEOTIDE SEQUENCE [MRNA]</scope>
    <source>
        <strain>AX3</strain>
    </source>
</reference>
<reference key="2">
    <citation type="journal article" date="2001" name="Nucleic Acids Res.">
        <title>The Dictyostelium discoideum family of Rho-related proteins.</title>
        <authorList>
            <person name="Rivero F."/>
            <person name="Dislich H."/>
            <person name="Gloeckner G."/>
            <person name="Noegel A.A."/>
        </authorList>
    </citation>
    <scope>NUCLEOTIDE SEQUENCE [GENOMIC DNA]</scope>
    <source>
        <strain>AX4</strain>
    </source>
</reference>
<reference key="3">
    <citation type="journal article" date="2005" name="Nature">
        <title>The genome of the social amoeba Dictyostelium discoideum.</title>
        <authorList>
            <person name="Eichinger L."/>
            <person name="Pachebat J.A."/>
            <person name="Gloeckner G."/>
            <person name="Rajandream M.A."/>
            <person name="Sucgang R."/>
            <person name="Berriman M."/>
            <person name="Song J."/>
            <person name="Olsen R."/>
            <person name="Szafranski K."/>
            <person name="Xu Q."/>
            <person name="Tunggal B."/>
            <person name="Kummerfeld S."/>
            <person name="Madera M."/>
            <person name="Konfortov B.A."/>
            <person name="Rivero F."/>
            <person name="Bankier A.T."/>
            <person name="Lehmann R."/>
            <person name="Hamlin N."/>
            <person name="Davies R."/>
            <person name="Gaudet P."/>
            <person name="Fey P."/>
            <person name="Pilcher K."/>
            <person name="Chen G."/>
            <person name="Saunders D."/>
            <person name="Sodergren E.J."/>
            <person name="Davis P."/>
            <person name="Kerhornou A."/>
            <person name="Nie X."/>
            <person name="Hall N."/>
            <person name="Anjard C."/>
            <person name="Hemphill L."/>
            <person name="Bason N."/>
            <person name="Farbrother P."/>
            <person name="Desany B."/>
            <person name="Just E."/>
            <person name="Morio T."/>
            <person name="Rost R."/>
            <person name="Churcher C.M."/>
            <person name="Cooper J."/>
            <person name="Haydock S."/>
            <person name="van Driessche N."/>
            <person name="Cronin A."/>
            <person name="Goodhead I."/>
            <person name="Muzny D.M."/>
            <person name="Mourier T."/>
            <person name="Pain A."/>
            <person name="Lu M."/>
            <person name="Harper D."/>
            <person name="Lindsay R."/>
            <person name="Hauser H."/>
            <person name="James K.D."/>
            <person name="Quiles M."/>
            <person name="Madan Babu M."/>
            <person name="Saito T."/>
            <person name="Buchrieser C."/>
            <person name="Wardroper A."/>
            <person name="Felder M."/>
            <person name="Thangavelu M."/>
            <person name="Johnson D."/>
            <person name="Knights A."/>
            <person name="Loulseged H."/>
            <person name="Mungall K.L."/>
            <person name="Oliver K."/>
            <person name="Price C."/>
            <person name="Quail M.A."/>
            <person name="Urushihara H."/>
            <person name="Hernandez J."/>
            <person name="Rabbinowitsch E."/>
            <person name="Steffen D."/>
            <person name="Sanders M."/>
            <person name="Ma J."/>
            <person name="Kohara Y."/>
            <person name="Sharp S."/>
            <person name="Simmonds M.N."/>
            <person name="Spiegler S."/>
            <person name="Tivey A."/>
            <person name="Sugano S."/>
            <person name="White B."/>
            <person name="Walker D."/>
            <person name="Woodward J.R."/>
            <person name="Winckler T."/>
            <person name="Tanaka Y."/>
            <person name="Shaulsky G."/>
            <person name="Schleicher M."/>
            <person name="Weinstock G.M."/>
            <person name="Rosenthal A."/>
            <person name="Cox E.C."/>
            <person name="Chisholm R.L."/>
            <person name="Gibbs R.A."/>
            <person name="Loomis W.F."/>
            <person name="Platzer M."/>
            <person name="Kay R.R."/>
            <person name="Williams J.G."/>
            <person name="Dear P.H."/>
            <person name="Noegel A.A."/>
            <person name="Barrell B.G."/>
            <person name="Kuspa A."/>
        </authorList>
    </citation>
    <scope>NUCLEOTIDE SEQUENCE [LARGE SCALE GENOMIC DNA]</scope>
    <source>
        <strain>AX4</strain>
    </source>
</reference>
<reference key="4">
    <citation type="journal article" date="1998" name="J. Cell Sci.">
        <title>The IQGAP-related protein DGAP1 interacts with Rac and is involved in the modulation of the F-actin cytoskeleton and control of cell motility.</title>
        <authorList>
            <person name="Faix J."/>
            <person name="Clougherty C."/>
            <person name="Konzok A."/>
            <person name="Mintert U."/>
            <person name="Murphy J."/>
            <person name="Albrecht R."/>
            <person name="Muhlbauer B."/>
            <person name="Kuhlmann J."/>
        </authorList>
    </citation>
    <scope>INTERACTION WITH RGAA</scope>
</reference>
<reference key="5">
    <citation type="journal article" date="2000" name="J. Cell Sci.">
        <title>Rac1 GTPases control filopodia formation, cell motility, endocytosis, cytokinesis and development in Dictyostelium.</title>
        <authorList>
            <person name="Dumontier M."/>
            <person name="Hoecht P."/>
            <person name="Mintert U."/>
            <person name="Faix J."/>
        </authorList>
    </citation>
    <scope>FUNCTION</scope>
    <scope>INTERACTION WITH RGAA</scope>
</reference>
<reference key="6">
    <citation type="journal article" date="2005" name="Mol. Biol. Cell">
        <title>Cellular distribution and functions of wild-type and constitutively activated Dictyostelium PakB.</title>
        <authorList>
            <person name="de la Roche M."/>
            <person name="Mahasneh A."/>
            <person name="Lee S.-F."/>
            <person name="Rivero F."/>
            <person name="Cote G.P."/>
        </authorList>
    </citation>
    <scope>INTERACTION WITH PAKB</scope>
</reference>
<dbReference type="EMBL" id="L11589">
    <property type="protein sequence ID" value="AAC37392.1"/>
    <property type="molecule type" value="mRNA"/>
</dbReference>
<dbReference type="EMBL" id="AF310884">
    <property type="protein sequence ID" value="AAG45110.1"/>
    <property type="molecule type" value="Genomic_DNA"/>
</dbReference>
<dbReference type="EMBL" id="AAFI02000004">
    <property type="protein sequence ID" value="EAL72900.2"/>
    <property type="molecule type" value="Genomic_DNA"/>
</dbReference>
<dbReference type="RefSeq" id="XP_647053.2">
    <property type="nucleotide sequence ID" value="XM_641961.2"/>
</dbReference>
<dbReference type="SMR" id="P34145"/>
<dbReference type="FunCoup" id="P34145">
    <property type="interactions" value="380"/>
</dbReference>
<dbReference type="IntAct" id="P34145">
    <property type="interactions" value="1"/>
</dbReference>
<dbReference type="STRING" id="44689.P34145"/>
<dbReference type="PaxDb" id="44689-DDB0219941"/>
<dbReference type="EnsemblProtists" id="EAL72900">
    <property type="protein sequence ID" value="EAL72900"/>
    <property type="gene ID" value="DDB_G0268622"/>
</dbReference>
<dbReference type="GeneID" id="8616748"/>
<dbReference type="KEGG" id="ddi:DDB_G0268622"/>
<dbReference type="dictyBase" id="DDB_G0268622">
    <property type="gene designation" value="rac1B"/>
</dbReference>
<dbReference type="VEuPathDB" id="AmoebaDB:DDB_G0268622"/>
<dbReference type="eggNOG" id="KOG0393">
    <property type="taxonomic scope" value="Eukaryota"/>
</dbReference>
<dbReference type="HOGENOM" id="CLU_041217_21_3_1"/>
<dbReference type="InParanoid" id="P34145"/>
<dbReference type="OMA" id="RRMAPIT"/>
<dbReference type="PhylomeDB" id="P34145"/>
<dbReference type="Reactome" id="R-DDI-6798695">
    <property type="pathway name" value="Neutrophil degranulation"/>
</dbReference>
<dbReference type="Reactome" id="R-DDI-9013404">
    <property type="pathway name" value="RAC2 GTPase cycle"/>
</dbReference>
<dbReference type="Reactome" id="R-DDI-9013407">
    <property type="pathway name" value="RHOH GTPase cycle"/>
</dbReference>
<dbReference type="Reactome" id="R-DDI-9013408">
    <property type="pathway name" value="RHOG GTPase cycle"/>
</dbReference>
<dbReference type="Reactome" id="R-DDI-9013418">
    <property type="pathway name" value="RHOBTB2 GTPase cycle"/>
</dbReference>
<dbReference type="Reactome" id="R-DDI-9013422">
    <property type="pathway name" value="RHOBTB1 GTPase cycle"/>
</dbReference>
<dbReference type="PRO" id="PR:P34145"/>
<dbReference type="Proteomes" id="UP000002195">
    <property type="component" value="Chromosome 1"/>
</dbReference>
<dbReference type="GO" id="GO:0042995">
    <property type="term" value="C:cell projection"/>
    <property type="evidence" value="ECO:0000318"/>
    <property type="project" value="GO_Central"/>
</dbReference>
<dbReference type="GO" id="GO:0005737">
    <property type="term" value="C:cytoplasm"/>
    <property type="evidence" value="ECO:0000314"/>
    <property type="project" value="dictyBase"/>
</dbReference>
<dbReference type="GO" id="GO:0031410">
    <property type="term" value="C:cytoplasmic vesicle"/>
    <property type="evidence" value="ECO:0000318"/>
    <property type="project" value="GO_Central"/>
</dbReference>
<dbReference type="GO" id="GO:0005856">
    <property type="term" value="C:cytoskeleton"/>
    <property type="evidence" value="ECO:0000318"/>
    <property type="project" value="GO_Central"/>
</dbReference>
<dbReference type="GO" id="GO:0030027">
    <property type="term" value="C:lamellipodium"/>
    <property type="evidence" value="ECO:0000314"/>
    <property type="project" value="dictyBase"/>
</dbReference>
<dbReference type="GO" id="GO:0005886">
    <property type="term" value="C:plasma membrane"/>
    <property type="evidence" value="ECO:0000314"/>
    <property type="project" value="dictyBase"/>
</dbReference>
<dbReference type="GO" id="GO:0031143">
    <property type="term" value="C:pseudopodium"/>
    <property type="evidence" value="ECO:0000314"/>
    <property type="project" value="dictyBase"/>
</dbReference>
<dbReference type="GO" id="GO:0005525">
    <property type="term" value="F:GTP binding"/>
    <property type="evidence" value="ECO:0000318"/>
    <property type="project" value="GO_Central"/>
</dbReference>
<dbReference type="GO" id="GO:0003924">
    <property type="term" value="F:GTPase activity"/>
    <property type="evidence" value="ECO:0000318"/>
    <property type="project" value="GO_Central"/>
</dbReference>
<dbReference type="GO" id="GO:0019901">
    <property type="term" value="F:protein kinase binding"/>
    <property type="evidence" value="ECO:0000353"/>
    <property type="project" value="dictyBase"/>
</dbReference>
<dbReference type="GO" id="GO:0007015">
    <property type="term" value="P:actin filament organization"/>
    <property type="evidence" value="ECO:0000318"/>
    <property type="project" value="GO_Central"/>
</dbReference>
<dbReference type="GO" id="GO:0031152">
    <property type="term" value="P:aggregation involved in sorocarp development"/>
    <property type="evidence" value="ECO:0000315"/>
    <property type="project" value="dictyBase"/>
</dbReference>
<dbReference type="GO" id="GO:0043326">
    <property type="term" value="P:chemotaxis to folate"/>
    <property type="evidence" value="ECO:0000315"/>
    <property type="project" value="dictyBase"/>
</dbReference>
<dbReference type="GO" id="GO:0030865">
    <property type="term" value="P:cortical cytoskeleton organization"/>
    <property type="evidence" value="ECO:0000318"/>
    <property type="project" value="GO_Central"/>
</dbReference>
<dbReference type="GO" id="GO:0006897">
    <property type="term" value="P:endocytosis"/>
    <property type="evidence" value="ECO:0000315"/>
    <property type="project" value="dictyBase"/>
</dbReference>
<dbReference type="GO" id="GO:0007163">
    <property type="term" value="P:establishment or maintenance of cell polarity"/>
    <property type="evidence" value="ECO:0000318"/>
    <property type="project" value="GO_Central"/>
</dbReference>
<dbReference type="GO" id="GO:0000281">
    <property type="term" value="P:mitotic cytokinesis"/>
    <property type="evidence" value="ECO:0000315"/>
    <property type="project" value="dictyBase"/>
</dbReference>
<dbReference type="GO" id="GO:0030838">
    <property type="term" value="P:positive regulation of actin filament polymerization"/>
    <property type="evidence" value="ECO:0000314"/>
    <property type="project" value="dictyBase"/>
</dbReference>
<dbReference type="GO" id="GO:0016601">
    <property type="term" value="P:Rac protein signal transduction"/>
    <property type="evidence" value="ECO:0000314"/>
    <property type="project" value="dictyBase"/>
</dbReference>
<dbReference type="GO" id="GO:0032956">
    <property type="term" value="P:regulation of actin cytoskeleton organization"/>
    <property type="evidence" value="ECO:0000315"/>
    <property type="project" value="dictyBase"/>
</dbReference>
<dbReference type="GO" id="GO:0008360">
    <property type="term" value="P:regulation of cell shape"/>
    <property type="evidence" value="ECO:0000315"/>
    <property type="project" value="dictyBase"/>
</dbReference>
<dbReference type="GO" id="GO:2000114">
    <property type="term" value="P:regulation of establishment of cell polarity"/>
    <property type="evidence" value="ECO:0000315"/>
    <property type="project" value="dictyBase"/>
</dbReference>
<dbReference type="GO" id="GO:1902412">
    <property type="term" value="P:regulation of mitotic cytokinesis"/>
    <property type="evidence" value="ECO:0000315"/>
    <property type="project" value="dictyBase"/>
</dbReference>
<dbReference type="GO" id="GO:0009617">
    <property type="term" value="P:response to bacterium"/>
    <property type="evidence" value="ECO:0007007"/>
    <property type="project" value="dictyBase"/>
</dbReference>
<dbReference type="GO" id="GO:1902351">
    <property type="term" value="P:response to imidacloprid"/>
    <property type="evidence" value="ECO:0000270"/>
    <property type="project" value="dictyBase"/>
</dbReference>
<dbReference type="GO" id="GO:0019953">
    <property type="term" value="P:sexual reproduction"/>
    <property type="evidence" value="ECO:0000270"/>
    <property type="project" value="dictyBase"/>
</dbReference>
<dbReference type="GO" id="GO:0007165">
    <property type="term" value="P:signal transduction"/>
    <property type="evidence" value="ECO:0000318"/>
    <property type="project" value="GO_Central"/>
</dbReference>
<dbReference type="CDD" id="cd01871">
    <property type="entry name" value="Rac1_like"/>
    <property type="match status" value="1"/>
</dbReference>
<dbReference type="FunFam" id="3.40.50.300:FF:000088">
    <property type="entry name" value="Ras-related C3 botulinum toxin substrate 1"/>
    <property type="match status" value="1"/>
</dbReference>
<dbReference type="Gene3D" id="3.40.50.300">
    <property type="entry name" value="P-loop containing nucleotide triphosphate hydrolases"/>
    <property type="match status" value="1"/>
</dbReference>
<dbReference type="InterPro" id="IPR027417">
    <property type="entry name" value="P-loop_NTPase"/>
</dbReference>
<dbReference type="InterPro" id="IPR005225">
    <property type="entry name" value="Small_GTP-bd"/>
</dbReference>
<dbReference type="InterPro" id="IPR001806">
    <property type="entry name" value="Small_GTPase"/>
</dbReference>
<dbReference type="InterPro" id="IPR003578">
    <property type="entry name" value="Small_GTPase_Rho"/>
</dbReference>
<dbReference type="NCBIfam" id="TIGR00231">
    <property type="entry name" value="small_GTP"/>
    <property type="match status" value="1"/>
</dbReference>
<dbReference type="PANTHER" id="PTHR24072">
    <property type="entry name" value="RHO FAMILY GTPASE"/>
    <property type="match status" value="1"/>
</dbReference>
<dbReference type="Pfam" id="PF00071">
    <property type="entry name" value="Ras"/>
    <property type="match status" value="1"/>
</dbReference>
<dbReference type="PRINTS" id="PR00449">
    <property type="entry name" value="RASTRNSFRMNG"/>
</dbReference>
<dbReference type="SMART" id="SM00175">
    <property type="entry name" value="RAB"/>
    <property type="match status" value="1"/>
</dbReference>
<dbReference type="SMART" id="SM00176">
    <property type="entry name" value="RAN"/>
    <property type="match status" value="1"/>
</dbReference>
<dbReference type="SMART" id="SM00173">
    <property type="entry name" value="RAS"/>
    <property type="match status" value="1"/>
</dbReference>
<dbReference type="SMART" id="SM00174">
    <property type="entry name" value="RHO"/>
    <property type="match status" value="1"/>
</dbReference>
<dbReference type="SUPFAM" id="SSF52540">
    <property type="entry name" value="P-loop containing nucleoside triphosphate hydrolases"/>
    <property type="match status" value="1"/>
</dbReference>
<dbReference type="PROSITE" id="PS51420">
    <property type="entry name" value="RHO"/>
    <property type="match status" value="1"/>
</dbReference>
<gene>
    <name type="primary">rac1B</name>
    <name type="ORF">DDB_G0268622</name>
</gene>
<feature type="chain" id="PRO_0000198896" description="Rho-related protein rac1B">
    <location>
        <begin position="1"/>
        <end position="191"/>
    </location>
</feature>
<feature type="propeptide" id="PRO_0000281247" description="Removed in mature form" evidence="1">
    <location>
        <begin position="192"/>
        <end position="194"/>
    </location>
</feature>
<feature type="short sequence motif" description="Effector region" evidence="2">
    <location>
        <begin position="32"/>
        <end position="40"/>
    </location>
</feature>
<feature type="binding site" evidence="1">
    <location>
        <begin position="10"/>
        <end position="17"/>
    </location>
    <ligand>
        <name>GTP</name>
        <dbReference type="ChEBI" id="CHEBI:37565"/>
    </ligand>
</feature>
<feature type="binding site" evidence="1">
    <location>
        <begin position="57"/>
        <end position="61"/>
    </location>
    <ligand>
        <name>GTP</name>
        <dbReference type="ChEBI" id="CHEBI:37565"/>
    </ligand>
</feature>
<feature type="binding site" evidence="1">
    <location>
        <begin position="115"/>
        <end position="118"/>
    </location>
    <ligand>
        <name>GTP</name>
        <dbReference type="ChEBI" id="CHEBI:37565"/>
    </ligand>
</feature>
<feature type="modified residue" description="Cysteine methyl ester" evidence="1">
    <location>
        <position position="191"/>
    </location>
</feature>
<feature type="lipid moiety-binding region" description="S-geranylgeranyl cysteine" evidence="1">
    <location>
        <position position="191"/>
    </location>
</feature>
<feature type="sequence conflict" description="In Ref. 1; AAC37392." evidence="6" ref="1">
    <original>P</original>
    <variation>R</variation>
    <location>
        <position position="109"/>
    </location>
</feature>
<accession>P34145</accession>
<accession>Q55EG7</accession>
<accession>Q9GPT7</accession>
<keyword id="KW-1003">Cell membrane</keyword>
<keyword id="KW-0342">GTP-binding</keyword>
<keyword id="KW-0449">Lipoprotein</keyword>
<keyword id="KW-0472">Membrane</keyword>
<keyword id="KW-0488">Methylation</keyword>
<keyword id="KW-0547">Nucleotide-binding</keyword>
<keyword id="KW-0636">Prenylation</keyword>
<keyword id="KW-1185">Reference proteome</keyword>
<name>RAC1B_DICDI</name>
<protein>
    <recommendedName>
        <fullName>Rho-related protein rac1B</fullName>
    </recommendedName>
</protein>
<sequence length="194" mass="21676">MQAIKCVVVGDGAVGKTCLLISYTTNAFPGEYIPTVFDNYSANVMVDGKPINLGLWDTAGQEDYDRLRPLSYPQTDVFLICFSIVSPASFENVNGKWHPEICHHAPNVPIILVGTKLDMREDRDTQDRLKEKKLYPVSYEQGLSKMKEINAVKYLECSALTQKGLKTVFDEAIRSVINPTLKKKPKSSKGCIIM</sequence>
<evidence type="ECO:0000250" key="1"/>
<evidence type="ECO:0000255" key="2"/>
<evidence type="ECO:0000269" key="3">
    <source>
    </source>
</evidence>
<evidence type="ECO:0000269" key="4">
    <source>
    </source>
</evidence>
<evidence type="ECO:0000269" key="5">
    <source>
    </source>
</evidence>
<evidence type="ECO:0000305" key="6"/>